<accession>A9WHT8</accession>
<dbReference type="EC" id="4.3.1.3" evidence="1"/>
<dbReference type="EMBL" id="CP000909">
    <property type="protein sequence ID" value="ABY34206.1"/>
    <property type="molecule type" value="Genomic_DNA"/>
</dbReference>
<dbReference type="RefSeq" id="WP_012256862.1">
    <property type="nucleotide sequence ID" value="NC_010175.1"/>
</dbReference>
<dbReference type="RefSeq" id="YP_001634595.1">
    <property type="nucleotide sequence ID" value="NC_010175.1"/>
</dbReference>
<dbReference type="SMR" id="A9WHT8"/>
<dbReference type="FunCoup" id="A9WHT8">
    <property type="interactions" value="69"/>
</dbReference>
<dbReference type="STRING" id="324602.Caur_0974"/>
<dbReference type="EnsemblBacteria" id="ABY34206">
    <property type="protein sequence ID" value="ABY34206"/>
    <property type="gene ID" value="Caur_0974"/>
</dbReference>
<dbReference type="KEGG" id="cau:Caur_0974"/>
<dbReference type="PATRIC" id="fig|324602.8.peg.1113"/>
<dbReference type="eggNOG" id="COG2986">
    <property type="taxonomic scope" value="Bacteria"/>
</dbReference>
<dbReference type="HOGENOM" id="CLU_014801_4_0_0"/>
<dbReference type="InParanoid" id="A9WHT8"/>
<dbReference type="UniPathway" id="UPA00379">
    <property type="reaction ID" value="UER00549"/>
</dbReference>
<dbReference type="Proteomes" id="UP000002008">
    <property type="component" value="Chromosome"/>
</dbReference>
<dbReference type="GO" id="GO:0005737">
    <property type="term" value="C:cytoplasm"/>
    <property type="evidence" value="ECO:0007669"/>
    <property type="project" value="UniProtKB-SubCell"/>
</dbReference>
<dbReference type="GO" id="GO:0004397">
    <property type="term" value="F:histidine ammonia-lyase activity"/>
    <property type="evidence" value="ECO:0000318"/>
    <property type="project" value="GO_Central"/>
</dbReference>
<dbReference type="GO" id="GO:0006548">
    <property type="term" value="P:L-histidine catabolic process"/>
    <property type="evidence" value="ECO:0000318"/>
    <property type="project" value="GO_Central"/>
</dbReference>
<dbReference type="GO" id="GO:0019556">
    <property type="term" value="P:L-histidine catabolic process to glutamate and formamide"/>
    <property type="evidence" value="ECO:0007669"/>
    <property type="project" value="UniProtKB-UniPathway"/>
</dbReference>
<dbReference type="GO" id="GO:0019557">
    <property type="term" value="P:L-histidine catabolic process to glutamate and formate"/>
    <property type="evidence" value="ECO:0007669"/>
    <property type="project" value="UniProtKB-UniPathway"/>
</dbReference>
<dbReference type="CDD" id="cd00332">
    <property type="entry name" value="PAL-HAL"/>
    <property type="match status" value="1"/>
</dbReference>
<dbReference type="FunFam" id="1.10.275.10:FF:000005">
    <property type="entry name" value="Histidine ammonia-lyase"/>
    <property type="match status" value="1"/>
</dbReference>
<dbReference type="FunFam" id="1.20.200.10:FF:000003">
    <property type="entry name" value="Histidine ammonia-lyase"/>
    <property type="match status" value="1"/>
</dbReference>
<dbReference type="Gene3D" id="1.20.200.10">
    <property type="entry name" value="Fumarase/aspartase (Central domain)"/>
    <property type="match status" value="1"/>
</dbReference>
<dbReference type="Gene3D" id="1.10.275.10">
    <property type="entry name" value="Fumarase/aspartase (N-terminal domain)"/>
    <property type="match status" value="1"/>
</dbReference>
<dbReference type="HAMAP" id="MF_00229">
    <property type="entry name" value="His_ammonia_lyase"/>
    <property type="match status" value="1"/>
</dbReference>
<dbReference type="InterPro" id="IPR001106">
    <property type="entry name" value="Aromatic_Lyase"/>
</dbReference>
<dbReference type="InterPro" id="IPR024083">
    <property type="entry name" value="Fumarase/histidase_N"/>
</dbReference>
<dbReference type="InterPro" id="IPR005921">
    <property type="entry name" value="HutH"/>
</dbReference>
<dbReference type="InterPro" id="IPR008948">
    <property type="entry name" value="L-Aspartase-like"/>
</dbReference>
<dbReference type="InterPro" id="IPR022313">
    <property type="entry name" value="Phe/His_NH3-lyase_AS"/>
</dbReference>
<dbReference type="NCBIfam" id="TIGR01225">
    <property type="entry name" value="hutH"/>
    <property type="match status" value="1"/>
</dbReference>
<dbReference type="NCBIfam" id="NF006871">
    <property type="entry name" value="PRK09367.1"/>
    <property type="match status" value="1"/>
</dbReference>
<dbReference type="PANTHER" id="PTHR10362">
    <property type="entry name" value="HISTIDINE AMMONIA-LYASE"/>
    <property type="match status" value="1"/>
</dbReference>
<dbReference type="Pfam" id="PF00221">
    <property type="entry name" value="Lyase_aromatic"/>
    <property type="match status" value="1"/>
</dbReference>
<dbReference type="SUPFAM" id="SSF48557">
    <property type="entry name" value="L-aspartase-like"/>
    <property type="match status" value="1"/>
</dbReference>
<dbReference type="PROSITE" id="PS00488">
    <property type="entry name" value="PAL_HISTIDASE"/>
    <property type="match status" value="1"/>
</dbReference>
<gene>
    <name evidence="1" type="primary">hutH</name>
    <name type="ordered locus">Caur_0974</name>
</gene>
<reference key="1">
    <citation type="journal article" date="2011" name="BMC Genomics">
        <title>Complete genome sequence of the filamentous anoxygenic phototrophic bacterium Chloroflexus aurantiacus.</title>
        <authorList>
            <person name="Tang K.H."/>
            <person name="Barry K."/>
            <person name="Chertkov O."/>
            <person name="Dalin E."/>
            <person name="Han C.S."/>
            <person name="Hauser L.J."/>
            <person name="Honchak B.M."/>
            <person name="Karbach L.E."/>
            <person name="Land M.L."/>
            <person name="Lapidus A."/>
            <person name="Larimer F.W."/>
            <person name="Mikhailova N."/>
            <person name="Pitluck S."/>
            <person name="Pierson B.K."/>
            <person name="Blankenship R.E."/>
        </authorList>
    </citation>
    <scope>NUCLEOTIDE SEQUENCE [LARGE SCALE GENOMIC DNA]</scope>
    <source>
        <strain>ATCC 29366 / DSM 635 / J-10-fl</strain>
    </source>
</reference>
<organism>
    <name type="scientific">Chloroflexus aurantiacus (strain ATCC 29366 / DSM 635 / J-10-fl)</name>
    <dbReference type="NCBI Taxonomy" id="324602"/>
    <lineage>
        <taxon>Bacteria</taxon>
        <taxon>Bacillati</taxon>
        <taxon>Chloroflexota</taxon>
        <taxon>Chloroflexia</taxon>
        <taxon>Chloroflexales</taxon>
        <taxon>Chloroflexineae</taxon>
        <taxon>Chloroflexaceae</taxon>
        <taxon>Chloroflexus</taxon>
    </lineage>
</organism>
<comment type="catalytic activity">
    <reaction evidence="1">
        <text>L-histidine = trans-urocanate + NH4(+)</text>
        <dbReference type="Rhea" id="RHEA:21232"/>
        <dbReference type="ChEBI" id="CHEBI:17771"/>
        <dbReference type="ChEBI" id="CHEBI:28938"/>
        <dbReference type="ChEBI" id="CHEBI:57595"/>
        <dbReference type="EC" id="4.3.1.3"/>
    </reaction>
</comment>
<comment type="pathway">
    <text evidence="1">Amino-acid degradation; L-histidine degradation into L-glutamate; N-formimidoyl-L-glutamate from L-histidine: step 1/3.</text>
</comment>
<comment type="subcellular location">
    <subcellularLocation>
        <location evidence="1">Cytoplasm</location>
    </subcellularLocation>
</comment>
<comment type="PTM">
    <text evidence="1">Contains an active site 4-methylidene-imidazol-5-one (MIO), which is formed autocatalytically by cyclization and dehydration of residues Ala-Ser-Gly.</text>
</comment>
<comment type="similarity">
    <text evidence="1">Belongs to the PAL/histidase family.</text>
</comment>
<name>HUTH_CHLAA</name>
<protein>
    <recommendedName>
        <fullName evidence="1">Histidine ammonia-lyase</fullName>
        <shortName evidence="1">Histidase</shortName>
        <ecNumber evidence="1">4.3.1.3</ecNumber>
    </recommendedName>
</protein>
<feature type="chain" id="PRO_1000078225" description="Histidine ammonia-lyase">
    <location>
        <begin position="1"/>
        <end position="523"/>
    </location>
</feature>
<feature type="modified residue" description="2,3-didehydroalanine (Ser)" evidence="1">
    <location>
        <position position="149"/>
    </location>
</feature>
<feature type="cross-link" description="5-imidazolinone (Ala-Gly)" evidence="1">
    <location>
        <begin position="148"/>
        <end position="150"/>
    </location>
</feature>
<keyword id="KW-0963">Cytoplasm</keyword>
<keyword id="KW-0369">Histidine metabolism</keyword>
<keyword id="KW-0456">Lyase</keyword>
<keyword id="KW-1185">Reference proteome</keyword>
<proteinExistence type="inferred from homology"/>
<evidence type="ECO:0000255" key="1">
    <source>
        <dbReference type="HAMAP-Rule" id="MF_00229"/>
    </source>
</evidence>
<sequence>MQIREVILDGESLTIEQVLAVAYGQPGTPVVRLAPIARQRVERAAQAVQDLLARGVVAYGITTGFGAFKDRVIAPDQVERLQYNILVSHAVGVGPVFDIPTTRAIMLIRANTLARGHSGVRLQTVERLLDMLNQGIHPRIPCKGSLGASGDLAPLAHMALPLIGLGEVEWQGEVLPAATALERLGWQPLHLAAKEGLALTNGTAVMCALGVIETARAETLSATADIAGCLSLEALYGTPAAFDARLHALRPFPRQIECAAHLRRLLAGSTFVRNNDPRHVQDAYTLRCIPQVHGAVRDAIAYARWVFAIELNAVTDNPLLFVDDDGNVEVISGGNFHGEPLAIALDYLGLAVAELGNIAERRLMRLTDEASNTHVLPAFLTRAGGLNSGFMIVQYTAAALATENKVLAHPASVDSIPTSANVEDHVSMGVTAGLKLRSIIDNVSQILALELFAAAQGIDFRRQELGSQARLGRGTGPVYELIRQYVPFIAEDTLLHPYITIISELVAQGKIAAAAAVHDDADA</sequence>